<gene>
    <name evidence="1" type="primary">rplN</name>
    <name type="ordered locus">TTE2282</name>
</gene>
<protein>
    <recommendedName>
        <fullName evidence="1">Large ribosomal subunit protein uL14</fullName>
    </recommendedName>
    <alternativeName>
        <fullName evidence="2">50S ribosomal protein L14</fullName>
    </alternativeName>
</protein>
<reference key="1">
    <citation type="journal article" date="2002" name="Genome Res.">
        <title>A complete sequence of the T. tengcongensis genome.</title>
        <authorList>
            <person name="Bao Q."/>
            <person name="Tian Y."/>
            <person name="Li W."/>
            <person name="Xu Z."/>
            <person name="Xuan Z."/>
            <person name="Hu S."/>
            <person name="Dong W."/>
            <person name="Yang J."/>
            <person name="Chen Y."/>
            <person name="Xue Y."/>
            <person name="Xu Y."/>
            <person name="Lai X."/>
            <person name="Huang L."/>
            <person name="Dong X."/>
            <person name="Ma Y."/>
            <person name="Ling L."/>
            <person name="Tan H."/>
            <person name="Chen R."/>
            <person name="Wang J."/>
            <person name="Yu J."/>
            <person name="Yang H."/>
        </authorList>
    </citation>
    <scope>NUCLEOTIDE SEQUENCE [LARGE SCALE GENOMIC DNA]</scope>
    <source>
        <strain>DSM 15242 / JCM 11007 / NBRC 100824 / MB4</strain>
    </source>
</reference>
<keyword id="KW-1185">Reference proteome</keyword>
<keyword id="KW-0687">Ribonucleoprotein</keyword>
<keyword id="KW-0689">Ribosomal protein</keyword>
<keyword id="KW-0694">RNA-binding</keyword>
<keyword id="KW-0699">rRNA-binding</keyword>
<comment type="function">
    <text evidence="1">Binds to 23S rRNA. Forms part of two intersubunit bridges in the 70S ribosome.</text>
</comment>
<comment type="subunit">
    <text evidence="1">Part of the 50S ribosomal subunit. Forms a cluster with proteins L3 and L19. In the 70S ribosome, L14 and L19 interact and together make contacts with the 16S rRNA in bridges B5 and B8.</text>
</comment>
<comment type="similarity">
    <text evidence="1">Belongs to the universal ribosomal protein uL14 family.</text>
</comment>
<sequence length="122" mass="13393">MIRPQTRLKVADNTGAKEIMCIRLLGGSNRKYSNVGDIIVASVKSATPGGVVKKGEVVKAVIVRTKKGIARKDGTYIRFDDNAAVIIRDDKQPRGTRIFGPVARELRDKDFMKIISLAPEVL</sequence>
<evidence type="ECO:0000255" key="1">
    <source>
        <dbReference type="HAMAP-Rule" id="MF_01367"/>
    </source>
</evidence>
<evidence type="ECO:0000305" key="2"/>
<organism>
    <name type="scientific">Caldanaerobacter subterraneus subsp. tengcongensis (strain DSM 15242 / JCM 11007 / NBRC 100824 / MB4)</name>
    <name type="common">Thermoanaerobacter tengcongensis</name>
    <dbReference type="NCBI Taxonomy" id="273068"/>
    <lineage>
        <taxon>Bacteria</taxon>
        <taxon>Bacillati</taxon>
        <taxon>Bacillota</taxon>
        <taxon>Clostridia</taxon>
        <taxon>Thermoanaerobacterales</taxon>
        <taxon>Thermoanaerobacteraceae</taxon>
        <taxon>Caldanaerobacter</taxon>
    </lineage>
</organism>
<accession>Q8R7W4</accession>
<name>RL14_CALS4</name>
<dbReference type="EMBL" id="AE008691">
    <property type="protein sequence ID" value="AAM25425.1"/>
    <property type="molecule type" value="Genomic_DNA"/>
</dbReference>
<dbReference type="RefSeq" id="WP_011026328.1">
    <property type="nucleotide sequence ID" value="NZ_JANUCV010000001.1"/>
</dbReference>
<dbReference type="SMR" id="Q8R7W4"/>
<dbReference type="STRING" id="273068.TTE2282"/>
<dbReference type="KEGG" id="tte:TTE2282"/>
<dbReference type="eggNOG" id="COG0093">
    <property type="taxonomic scope" value="Bacteria"/>
</dbReference>
<dbReference type="HOGENOM" id="CLU_095071_2_1_9"/>
<dbReference type="OrthoDB" id="9806379at2"/>
<dbReference type="Proteomes" id="UP000000555">
    <property type="component" value="Chromosome"/>
</dbReference>
<dbReference type="GO" id="GO:0022625">
    <property type="term" value="C:cytosolic large ribosomal subunit"/>
    <property type="evidence" value="ECO:0007669"/>
    <property type="project" value="TreeGrafter"/>
</dbReference>
<dbReference type="GO" id="GO:0070180">
    <property type="term" value="F:large ribosomal subunit rRNA binding"/>
    <property type="evidence" value="ECO:0007669"/>
    <property type="project" value="TreeGrafter"/>
</dbReference>
<dbReference type="GO" id="GO:0003735">
    <property type="term" value="F:structural constituent of ribosome"/>
    <property type="evidence" value="ECO:0007669"/>
    <property type="project" value="InterPro"/>
</dbReference>
<dbReference type="GO" id="GO:0006412">
    <property type="term" value="P:translation"/>
    <property type="evidence" value="ECO:0007669"/>
    <property type="project" value="UniProtKB-UniRule"/>
</dbReference>
<dbReference type="CDD" id="cd00337">
    <property type="entry name" value="Ribosomal_uL14"/>
    <property type="match status" value="1"/>
</dbReference>
<dbReference type="FunFam" id="2.40.150.20:FF:000001">
    <property type="entry name" value="50S ribosomal protein L14"/>
    <property type="match status" value="1"/>
</dbReference>
<dbReference type="Gene3D" id="2.40.150.20">
    <property type="entry name" value="Ribosomal protein L14"/>
    <property type="match status" value="1"/>
</dbReference>
<dbReference type="HAMAP" id="MF_01367">
    <property type="entry name" value="Ribosomal_uL14"/>
    <property type="match status" value="1"/>
</dbReference>
<dbReference type="InterPro" id="IPR000218">
    <property type="entry name" value="Ribosomal_uL14"/>
</dbReference>
<dbReference type="InterPro" id="IPR005745">
    <property type="entry name" value="Ribosomal_uL14_bac-type"/>
</dbReference>
<dbReference type="InterPro" id="IPR019972">
    <property type="entry name" value="Ribosomal_uL14_CS"/>
</dbReference>
<dbReference type="InterPro" id="IPR036853">
    <property type="entry name" value="Ribosomal_uL14_sf"/>
</dbReference>
<dbReference type="NCBIfam" id="TIGR01067">
    <property type="entry name" value="rplN_bact"/>
    <property type="match status" value="1"/>
</dbReference>
<dbReference type="PANTHER" id="PTHR11761">
    <property type="entry name" value="50S/60S RIBOSOMAL PROTEIN L14/L23"/>
    <property type="match status" value="1"/>
</dbReference>
<dbReference type="PANTHER" id="PTHR11761:SF3">
    <property type="entry name" value="LARGE RIBOSOMAL SUBUNIT PROTEIN UL14M"/>
    <property type="match status" value="1"/>
</dbReference>
<dbReference type="Pfam" id="PF00238">
    <property type="entry name" value="Ribosomal_L14"/>
    <property type="match status" value="1"/>
</dbReference>
<dbReference type="SMART" id="SM01374">
    <property type="entry name" value="Ribosomal_L14"/>
    <property type="match status" value="1"/>
</dbReference>
<dbReference type="SUPFAM" id="SSF50193">
    <property type="entry name" value="Ribosomal protein L14"/>
    <property type="match status" value="1"/>
</dbReference>
<dbReference type="PROSITE" id="PS00049">
    <property type="entry name" value="RIBOSOMAL_L14"/>
    <property type="match status" value="1"/>
</dbReference>
<proteinExistence type="inferred from homology"/>
<feature type="chain" id="PRO_1000055744" description="Large ribosomal subunit protein uL14">
    <location>
        <begin position="1"/>
        <end position="122"/>
    </location>
</feature>